<evidence type="ECO:0000255" key="1">
    <source>
        <dbReference type="HAMAP-Rule" id="MF_00739"/>
    </source>
</evidence>
<gene>
    <name evidence="1" type="primary">ureA</name>
    <name type="ordered locus">RPC_3696</name>
</gene>
<organism>
    <name type="scientific">Rhodopseudomonas palustris (strain BisB18)</name>
    <dbReference type="NCBI Taxonomy" id="316056"/>
    <lineage>
        <taxon>Bacteria</taxon>
        <taxon>Pseudomonadati</taxon>
        <taxon>Pseudomonadota</taxon>
        <taxon>Alphaproteobacteria</taxon>
        <taxon>Hyphomicrobiales</taxon>
        <taxon>Nitrobacteraceae</taxon>
        <taxon>Rhodopseudomonas</taxon>
    </lineage>
</organism>
<keyword id="KW-0963">Cytoplasm</keyword>
<keyword id="KW-0378">Hydrolase</keyword>
<proteinExistence type="inferred from homology"/>
<feature type="chain" id="PRO_0000239912" description="Urease subunit gamma">
    <location>
        <begin position="1"/>
        <end position="100"/>
    </location>
</feature>
<sequence>MNLSPREKDKLLISLAAMVARLRLARGVKLNHPEAVAIISDFIVEGARDGRSVAELMQAGAEVITRAQCMDGIPEMIHDIQVEATFPDGTKLVTVHEPIR</sequence>
<accession>Q210F5</accession>
<name>URE3_RHOPB</name>
<reference key="1">
    <citation type="submission" date="2006-03" db="EMBL/GenBank/DDBJ databases">
        <title>Complete sequence of Rhodopseudomonas palustris BisB18.</title>
        <authorList>
            <consortium name="US DOE Joint Genome Institute"/>
            <person name="Copeland A."/>
            <person name="Lucas S."/>
            <person name="Lapidus A."/>
            <person name="Barry K."/>
            <person name="Detter J.C."/>
            <person name="Glavina del Rio T."/>
            <person name="Hammon N."/>
            <person name="Israni S."/>
            <person name="Dalin E."/>
            <person name="Tice H."/>
            <person name="Pitluck S."/>
            <person name="Chain P."/>
            <person name="Malfatti S."/>
            <person name="Shin M."/>
            <person name="Vergez L."/>
            <person name="Schmutz J."/>
            <person name="Larimer F."/>
            <person name="Land M."/>
            <person name="Hauser L."/>
            <person name="Pelletier D.A."/>
            <person name="Kyrpides N."/>
            <person name="Anderson I."/>
            <person name="Oda Y."/>
            <person name="Harwood C.S."/>
            <person name="Richardson P."/>
        </authorList>
    </citation>
    <scope>NUCLEOTIDE SEQUENCE [LARGE SCALE GENOMIC DNA]</scope>
    <source>
        <strain>BisB18</strain>
    </source>
</reference>
<comment type="catalytic activity">
    <reaction evidence="1">
        <text>urea + 2 H2O + H(+) = hydrogencarbonate + 2 NH4(+)</text>
        <dbReference type="Rhea" id="RHEA:20557"/>
        <dbReference type="ChEBI" id="CHEBI:15377"/>
        <dbReference type="ChEBI" id="CHEBI:15378"/>
        <dbReference type="ChEBI" id="CHEBI:16199"/>
        <dbReference type="ChEBI" id="CHEBI:17544"/>
        <dbReference type="ChEBI" id="CHEBI:28938"/>
        <dbReference type="EC" id="3.5.1.5"/>
    </reaction>
</comment>
<comment type="pathway">
    <text evidence="1">Nitrogen metabolism; urea degradation; CO(2) and NH(3) from urea (urease route): step 1/1.</text>
</comment>
<comment type="subunit">
    <text evidence="1">Heterotrimer of UreA (gamma), UreB (beta) and UreC (alpha) subunits. Three heterotrimers associate to form the active enzyme.</text>
</comment>
<comment type="subcellular location">
    <subcellularLocation>
        <location evidence="1">Cytoplasm</location>
    </subcellularLocation>
</comment>
<comment type="similarity">
    <text evidence="1">Belongs to the urease gamma subunit family.</text>
</comment>
<dbReference type="EC" id="3.5.1.5" evidence="1"/>
<dbReference type="EMBL" id="CP000301">
    <property type="protein sequence ID" value="ABD89231.1"/>
    <property type="molecule type" value="Genomic_DNA"/>
</dbReference>
<dbReference type="SMR" id="Q210F5"/>
<dbReference type="STRING" id="316056.RPC_3696"/>
<dbReference type="KEGG" id="rpc:RPC_3696"/>
<dbReference type="eggNOG" id="COG0831">
    <property type="taxonomic scope" value="Bacteria"/>
</dbReference>
<dbReference type="HOGENOM" id="CLU_145825_1_0_5"/>
<dbReference type="OrthoDB" id="9797217at2"/>
<dbReference type="UniPathway" id="UPA00258">
    <property type="reaction ID" value="UER00370"/>
</dbReference>
<dbReference type="GO" id="GO:0005737">
    <property type="term" value="C:cytoplasm"/>
    <property type="evidence" value="ECO:0007669"/>
    <property type="project" value="UniProtKB-SubCell"/>
</dbReference>
<dbReference type="GO" id="GO:0016151">
    <property type="term" value="F:nickel cation binding"/>
    <property type="evidence" value="ECO:0007669"/>
    <property type="project" value="InterPro"/>
</dbReference>
<dbReference type="GO" id="GO:0009039">
    <property type="term" value="F:urease activity"/>
    <property type="evidence" value="ECO:0007669"/>
    <property type="project" value="UniProtKB-UniRule"/>
</dbReference>
<dbReference type="GO" id="GO:0043419">
    <property type="term" value="P:urea catabolic process"/>
    <property type="evidence" value="ECO:0007669"/>
    <property type="project" value="UniProtKB-UniRule"/>
</dbReference>
<dbReference type="CDD" id="cd00390">
    <property type="entry name" value="Urease_gamma"/>
    <property type="match status" value="1"/>
</dbReference>
<dbReference type="Gene3D" id="3.30.280.10">
    <property type="entry name" value="Urease, gamma-like subunit"/>
    <property type="match status" value="1"/>
</dbReference>
<dbReference type="HAMAP" id="MF_00739">
    <property type="entry name" value="Urease_gamma"/>
    <property type="match status" value="1"/>
</dbReference>
<dbReference type="InterPro" id="IPR012010">
    <property type="entry name" value="Urease_gamma"/>
</dbReference>
<dbReference type="InterPro" id="IPR002026">
    <property type="entry name" value="Urease_gamma/gamma-beta_su"/>
</dbReference>
<dbReference type="InterPro" id="IPR036463">
    <property type="entry name" value="Urease_gamma_sf"/>
</dbReference>
<dbReference type="InterPro" id="IPR050069">
    <property type="entry name" value="Urease_subunit"/>
</dbReference>
<dbReference type="NCBIfam" id="NF009712">
    <property type="entry name" value="PRK13241.1"/>
    <property type="match status" value="1"/>
</dbReference>
<dbReference type="NCBIfam" id="TIGR00193">
    <property type="entry name" value="urease_gam"/>
    <property type="match status" value="1"/>
</dbReference>
<dbReference type="PANTHER" id="PTHR33569">
    <property type="entry name" value="UREASE"/>
    <property type="match status" value="1"/>
</dbReference>
<dbReference type="PANTHER" id="PTHR33569:SF1">
    <property type="entry name" value="UREASE"/>
    <property type="match status" value="1"/>
</dbReference>
<dbReference type="Pfam" id="PF00547">
    <property type="entry name" value="Urease_gamma"/>
    <property type="match status" value="1"/>
</dbReference>
<dbReference type="PIRSF" id="PIRSF001223">
    <property type="entry name" value="Urease_gamma"/>
    <property type="match status" value="1"/>
</dbReference>
<dbReference type="SUPFAM" id="SSF54111">
    <property type="entry name" value="Urease, gamma-subunit"/>
    <property type="match status" value="1"/>
</dbReference>
<protein>
    <recommendedName>
        <fullName evidence="1">Urease subunit gamma</fullName>
        <ecNumber evidence="1">3.5.1.5</ecNumber>
    </recommendedName>
    <alternativeName>
        <fullName evidence="1">Urea amidohydrolase subunit gamma</fullName>
    </alternativeName>
</protein>